<sequence>MPQLDQFTYLTQFVWLCVFYMTFYVLLYNDGLPKISRIIKLRKRLVSQEKVGAEQSNDRVEQDVVFKECFQASANYLYSSVSGASKWCKGMVQLANAHKLQRMNKDYVCSLGEISVSQVIKKNALSTLSPSTYQTTSLASRQTTALNKIYVLRGQKRTLAKIKNGPRKKKIS</sequence>
<keyword id="KW-0066">ATP synthesis</keyword>
<keyword id="KW-0067">ATP-binding</keyword>
<keyword id="KW-0138">CF(0)</keyword>
<keyword id="KW-0375">Hydrogen ion transport</keyword>
<keyword id="KW-0406">Ion transport</keyword>
<keyword id="KW-0472">Membrane</keyword>
<keyword id="KW-0496">Mitochondrion</keyword>
<keyword id="KW-0547">Nucleotide-binding</keyword>
<keyword id="KW-1278">Translocase</keyword>
<keyword id="KW-0812">Transmembrane</keyword>
<keyword id="KW-1133">Transmembrane helix</keyword>
<keyword id="KW-0813">Transport</keyword>
<comment type="function">
    <text evidence="1">This is one of the chains of the nonenzymatic component (CF(0) subunit) of the mitochondrial ATPase complex.</text>
</comment>
<comment type="catalytic activity">
    <reaction>
        <text>ATP + H2O + 4 H(+)(in) = ADP + phosphate + 5 H(+)(out)</text>
        <dbReference type="Rhea" id="RHEA:57720"/>
        <dbReference type="ChEBI" id="CHEBI:15377"/>
        <dbReference type="ChEBI" id="CHEBI:15378"/>
        <dbReference type="ChEBI" id="CHEBI:30616"/>
        <dbReference type="ChEBI" id="CHEBI:43474"/>
        <dbReference type="ChEBI" id="CHEBI:456216"/>
        <dbReference type="EC" id="7.1.2.2"/>
    </reaction>
</comment>
<comment type="subunit">
    <text evidence="1">F-type ATPases have 2 components, CF(1) - the catalytic core - and CF(0) - the membrane proton channel. CF(1) has five subunits: alpha(3), beta(3), gamma(1), delta(1), epsilon(1). CF(0) has three main subunits: a, b and c (By similarity).</text>
</comment>
<comment type="subcellular location">
    <subcellularLocation>
        <location evidence="1">Mitochondrion membrane</location>
        <topology evidence="1">Single-pass membrane protein</topology>
    </subcellularLocation>
</comment>
<comment type="similarity">
    <text evidence="3">Belongs to the ATPase protein YMF19 family.</text>
</comment>
<feature type="chain" id="PRO_0000196845" description="Putative ATP synthase protein YMF19">
    <location>
        <begin position="1"/>
        <end position="172"/>
    </location>
</feature>
<feature type="transmembrane region" description="Helical" evidence="2">
    <location>
        <begin position="13"/>
        <end position="29"/>
    </location>
</feature>
<organism>
    <name type="scientific">Marchantia polymorpha</name>
    <name type="common">Common liverwort</name>
    <name type="synonym">Marchantia aquatica</name>
    <dbReference type="NCBI Taxonomy" id="3197"/>
    <lineage>
        <taxon>Eukaryota</taxon>
        <taxon>Viridiplantae</taxon>
        <taxon>Streptophyta</taxon>
        <taxon>Embryophyta</taxon>
        <taxon>Marchantiophyta</taxon>
        <taxon>Marchantiopsida</taxon>
        <taxon>Marchantiidae</taxon>
        <taxon>Marchantiales</taxon>
        <taxon>Marchantiaceae</taxon>
        <taxon>Marchantia</taxon>
    </lineage>
</organism>
<proteinExistence type="inferred from homology"/>
<accession>P38462</accession>
<geneLocation type="mitochondrion"/>
<reference key="1">
    <citation type="journal article" date="1992" name="J. Mol. Biol.">
        <title>Gene organization deduced from the complete sequence of liverwort Marchantia polymorpha mitochondrial DNA. A primitive form of plant mitochondrial genome.</title>
        <authorList>
            <person name="Oda K."/>
            <person name="Yamato K."/>
            <person name="Ohta E."/>
            <person name="Nakamura Y."/>
            <person name="Takemura M."/>
            <person name="Nozato N."/>
            <person name="Akashi K."/>
            <person name="Kanegae T."/>
            <person name="Ogura Y."/>
            <person name="Kohchi T."/>
            <person name="Ohyama K."/>
        </authorList>
    </citation>
    <scope>NUCLEOTIDE SEQUENCE [GENOMIC DNA]</scope>
</reference>
<protein>
    <recommendedName>
        <fullName>Putative ATP synthase protein YMF19</fullName>
        <ecNumber>7.1.2.2</ecNumber>
    </recommendedName>
    <alternativeName>
        <fullName>Mitochondrial protein YMF19</fullName>
    </alternativeName>
</protein>
<name>YMF19_MARPO</name>
<evidence type="ECO:0000250" key="1"/>
<evidence type="ECO:0000255" key="2"/>
<evidence type="ECO:0000305" key="3"/>
<dbReference type="EC" id="7.1.2.2"/>
<dbReference type="EMBL" id="M68929">
    <property type="protein sequence ID" value="AAC09426.1"/>
    <property type="molecule type" value="Genomic_DNA"/>
</dbReference>
<dbReference type="PIR" id="S25985">
    <property type="entry name" value="S25985"/>
</dbReference>
<dbReference type="SMR" id="P38462"/>
<dbReference type="GO" id="GO:0031966">
    <property type="term" value="C:mitochondrial membrane"/>
    <property type="evidence" value="ECO:0007669"/>
    <property type="project" value="UniProtKB-SubCell"/>
</dbReference>
<dbReference type="GO" id="GO:0045259">
    <property type="term" value="C:proton-transporting ATP synthase complex"/>
    <property type="evidence" value="ECO:0007669"/>
    <property type="project" value="UniProtKB-KW"/>
</dbReference>
<dbReference type="GO" id="GO:0005524">
    <property type="term" value="F:ATP binding"/>
    <property type="evidence" value="ECO:0007669"/>
    <property type="project" value="UniProtKB-KW"/>
</dbReference>
<dbReference type="GO" id="GO:0006754">
    <property type="term" value="P:ATP biosynthetic process"/>
    <property type="evidence" value="ECO:0007669"/>
    <property type="project" value="UniProtKB-KW"/>
</dbReference>
<dbReference type="GO" id="GO:1902600">
    <property type="term" value="P:proton transmembrane transport"/>
    <property type="evidence" value="ECO:0007669"/>
    <property type="project" value="UniProtKB-KW"/>
</dbReference>
<dbReference type="InterPro" id="IPR044975">
    <property type="entry name" value="YMF19-like"/>
</dbReference>
<dbReference type="InterPro" id="IPR003319">
    <property type="entry name" value="YMF19-like_N"/>
</dbReference>
<dbReference type="PANTHER" id="PTHR36816">
    <property type="entry name" value="ATP SYNTHASE PROTEIN YMF19"/>
    <property type="match status" value="1"/>
</dbReference>
<dbReference type="PANTHER" id="PTHR36816:SF1">
    <property type="entry name" value="ATP SYNTHASE PROTEIN YMF19"/>
    <property type="match status" value="1"/>
</dbReference>
<dbReference type="Pfam" id="PF02326">
    <property type="entry name" value="YMF19"/>
    <property type="match status" value="1"/>
</dbReference>
<gene>
    <name type="primary">YMF19</name>
</gene>